<protein>
    <recommendedName>
        <fullName evidence="19">Cysteine protease RavZ</fullName>
        <ecNumber evidence="2">3.4.22.-</ecNumber>
    </recommendedName>
    <alternativeName>
        <fullName evidence="15">Region allowing vacuole colocalization protein Z</fullName>
    </alternativeName>
</protein>
<organism>
    <name type="scientific">Legionella pneumophila subsp. pneumophila (strain Philadelphia 1 / ATCC 33152 / DSM 7513)</name>
    <dbReference type="NCBI Taxonomy" id="272624"/>
    <lineage>
        <taxon>Bacteria</taxon>
        <taxon>Pseudomonadati</taxon>
        <taxon>Pseudomonadota</taxon>
        <taxon>Gammaproteobacteria</taxon>
        <taxon>Legionellales</taxon>
        <taxon>Legionellaceae</taxon>
        <taxon>Legionella</taxon>
    </lineage>
</organism>
<evidence type="ECO:0000269" key="1">
    <source>
    </source>
</evidence>
<evidence type="ECO:0000269" key="2">
    <source>
    </source>
</evidence>
<evidence type="ECO:0000269" key="3">
    <source>
    </source>
</evidence>
<evidence type="ECO:0000269" key="4">
    <source>
    </source>
</evidence>
<evidence type="ECO:0000269" key="5">
    <source>
    </source>
</evidence>
<evidence type="ECO:0000269" key="6">
    <source>
    </source>
</evidence>
<evidence type="ECO:0000269" key="7">
    <source>
    </source>
</evidence>
<evidence type="ECO:0000269" key="8">
    <source>
    </source>
</evidence>
<evidence type="ECO:0000269" key="9">
    <source>
    </source>
</evidence>
<evidence type="ECO:0000269" key="10">
    <source>
    </source>
</evidence>
<evidence type="ECO:0000269" key="11">
    <source>
    </source>
</evidence>
<evidence type="ECO:0000269" key="12">
    <source>
    </source>
</evidence>
<evidence type="ECO:0000269" key="13">
    <source>
    </source>
</evidence>
<evidence type="ECO:0000269" key="14">
    <source>
    </source>
</evidence>
<evidence type="ECO:0000303" key="15">
    <source>
    </source>
</evidence>
<evidence type="ECO:0000303" key="16">
    <source>
    </source>
</evidence>
<evidence type="ECO:0000303" key="17">
    <source>
    </source>
</evidence>
<evidence type="ECO:0000303" key="18">
    <source>
    </source>
</evidence>
<evidence type="ECO:0000305" key="19"/>
<evidence type="ECO:0000305" key="20">
    <source>
    </source>
</evidence>
<evidence type="ECO:0000312" key="21">
    <source>
        <dbReference type="EMBL" id="AAU27763.1"/>
    </source>
</evidence>
<evidence type="ECO:0007744" key="22">
    <source>
        <dbReference type="PDB" id="5CQC"/>
    </source>
</evidence>
<evidence type="ECO:0007744" key="23">
    <source>
        <dbReference type="PDB" id="5HZY"/>
    </source>
</evidence>
<evidence type="ECO:0007744" key="24">
    <source>
        <dbReference type="PDB" id="5IO3"/>
    </source>
</evidence>
<evidence type="ECO:0007744" key="25">
    <source>
        <dbReference type="PDB" id="5MS2"/>
    </source>
</evidence>
<evidence type="ECO:0007744" key="26">
    <source>
        <dbReference type="PDB" id="5MS5"/>
    </source>
</evidence>
<evidence type="ECO:0007744" key="27">
    <source>
        <dbReference type="PDB" id="5XAD"/>
    </source>
</evidence>
<evidence type="ECO:0007829" key="28">
    <source>
        <dbReference type="PDB" id="5CQC"/>
    </source>
</evidence>
<evidence type="ECO:0007829" key="29">
    <source>
        <dbReference type="PDB" id="5HZY"/>
    </source>
</evidence>
<evidence type="ECO:0007829" key="30">
    <source>
        <dbReference type="PDB" id="5IO3"/>
    </source>
</evidence>
<evidence type="ECO:0007829" key="31">
    <source>
        <dbReference type="PDB" id="5MS2"/>
    </source>
</evidence>
<evidence type="ECO:0007829" key="32">
    <source>
        <dbReference type="PDB" id="5MS7"/>
    </source>
</evidence>
<evidence type="ECO:0007829" key="33">
    <source>
        <dbReference type="PDB" id="5MS8"/>
    </source>
</evidence>
<evidence type="ECO:0007829" key="34">
    <source>
        <dbReference type="PDB" id="5XAD"/>
    </source>
</evidence>
<proteinExistence type="evidence at protein level"/>
<comment type="function">
    <text evidence="2 3 5 7 8 9 10 11 12 13 14">Cysteine protease effector that inhibits host cell autophagy by targeting lipid-conjugated ATG8 family proteins on pre-autophagosomal structures (PubMed:23112293, PubMed:26343456, PubMed:28395732, PubMed:29458288, PubMed:31719622, PubMed:31722778, PubMed:32686895, PubMed:33298241). Specifically hydrolyzes the amide bond between the C-terminal glycine residue and an adjacent aromatic residue in ATG8 proteins conjugated to phosphatidylethanolamine (PE), producing an ATG8 protein that cannot be reconjugated by host ATG7 and ATG3 (PubMed:23112293, PubMed:26343456, PubMed:28395732, PubMed:29458288, PubMed:32686895). Mechanistically, Ravz interacts with ATG8 proteins conjugated to PE via its LIR motifs, extracts them from the membrane of autophagosomes and integrates the PE part into its own lipid-binding site (PubMed:28395732). It then removes the lipid component of the ATG8 protein (PubMed:28395732). Also able to mediate delipidation of ATG8 proteins conjugated to phosphatidylserine (PS) during non-canonical autophagy (PubMed:33909989). Inhibits host ubiquitin recruitment to bacteria-containing vacuoles, suggesting that it is able to mediate delipidation of other proteins in addition to ATG8 proteins (PubMed:28971069). It is however not involved in the exclusion of autophagy adapters from bacteria-containing vacuoles decorated with ubiquitin (PubMed:32482642).</text>
</comment>
<comment type="catalytic activity">
    <reaction evidence="2 3 5 12 13">
        <text>[protein]-C-terminal L-amino acid-glycyl-phosphatidylethanolamide + H2O = a 1,2-diacyl-sn-glycero-3-phosphoethanolamine-N-glycine + [protein]-C-terminal &lt;stereo&gt;L-&lt;/stereo&gt;amino acid</text>
        <dbReference type="Rhea" id="RHEA:67664"/>
        <dbReference type="Rhea" id="RHEA-COMP:17323"/>
        <dbReference type="Rhea" id="RHEA-COMP:17349"/>
        <dbReference type="ChEBI" id="CHEBI:15377"/>
        <dbReference type="ChEBI" id="CHEBI:90782"/>
        <dbReference type="ChEBI" id="CHEBI:172870"/>
        <dbReference type="ChEBI" id="CHEBI:172941"/>
    </reaction>
</comment>
<comment type="catalytic activity">
    <reaction evidence="14">
        <text>[protein]-C-terminal L-amino acid-glycyl-phosphatidylserine + H2O = 1,2-diacyl-sn-glycero-3-phospho-L-serine-N-glycine + [protein]-C-terminal &lt;stereo&gt;L-&lt;/stereo&gt;amino acid</text>
        <dbReference type="Rhea" id="RHEA:67912"/>
        <dbReference type="Rhea" id="RHEA-COMP:17326"/>
        <dbReference type="Rhea" id="RHEA-COMP:17349"/>
        <dbReference type="ChEBI" id="CHEBI:15377"/>
        <dbReference type="ChEBI" id="CHEBI:90782"/>
        <dbReference type="ChEBI" id="CHEBI:172942"/>
        <dbReference type="ChEBI" id="CHEBI:176543"/>
    </reaction>
</comment>
<comment type="subcellular location">
    <subcellularLocation>
        <location evidence="1">Secreted</location>
    </subcellularLocation>
    <subcellularLocation>
        <location evidence="2 3 9 10 13">Host cytoplasmic vesicle membrane</location>
    </subcellularLocation>
    <text evidence="2 3 9 10 13 20">Translocated into the host cell via the type IV secretion system (T4SS) (Probable). In host cells, localizes to mature autophagosome membranes (PubMed:23112293, PubMed:26343456, PubMed:31719622, PubMed:31722778, PubMed:33298241).</text>
</comment>
<comment type="domain">
    <text evidence="4 5 6 9 10">The LIR motifs (LC3-interacting regions) are required for the interaction with ATG8 family proteins (PubMed:27791457, PubMed:28395732, PubMed:28668392, PubMed:31722778). The LIR motifs 1 and 2 at the N-terminus bind one ATG8 protein and the LIR motif 3 at the C-terminus binds another ATG8 protein (PubMed:27791457, PubMed:31722778). Among ATG8 proteins, the LIR motif 3 has preference for host GABARAP (GABARAP GABARAPL1, GABARAPL2) compared to LC3 (MAP1LC3A, MAP1LC3B, MAP1LC3C) (PubMed:31719622).</text>
</comment>
<comment type="domain">
    <text evidence="3 5">The membrane targeting (MT) region binds phosphatidylinositol 3-monophosphate (PI3P) (PubMed:26343456). The MT region, together with the alpha-3 helix promote localization to high-curvature membranes, intimating localization to highly curved domains in autophagosome intermediate membranes (PubMed:26343456). The alpha-3 helix is involved in extraction of the phosphatidylethanolamine (PE) moiety and docking of the acyl chains into the lipid-binding site (PubMed:28395732).</text>
</comment>
<gene>
    <name evidence="15 16" type="primary">ravZ</name>
    <name evidence="21" type="ordered locus">lpg1683</name>
</gene>
<accession>Q5ZUV9</accession>
<dbReference type="EC" id="3.4.22.-" evidence="2"/>
<dbReference type="EMBL" id="AE017354">
    <property type="protein sequence ID" value="AAU27763.1"/>
    <property type="molecule type" value="Genomic_DNA"/>
</dbReference>
<dbReference type="RefSeq" id="WP_010947410.1">
    <property type="nucleotide sequence ID" value="NC_002942.5"/>
</dbReference>
<dbReference type="RefSeq" id="YP_095710.1">
    <property type="nucleotide sequence ID" value="NC_002942.5"/>
</dbReference>
<dbReference type="PDB" id="5CQC">
    <property type="method" value="X-ray"/>
    <property type="resolution" value="2.98 A"/>
    <property type="chains" value="A=10-458"/>
</dbReference>
<dbReference type="PDB" id="5HZY">
    <property type="method" value="X-ray"/>
    <property type="resolution" value="2.55 A"/>
    <property type="chains" value="A=49-502"/>
</dbReference>
<dbReference type="PDB" id="5IO3">
    <property type="method" value="X-ray"/>
    <property type="resolution" value="2.74 A"/>
    <property type="chains" value="A=1-502"/>
</dbReference>
<dbReference type="PDB" id="5IZV">
    <property type="method" value="X-ray"/>
    <property type="resolution" value="2.81 A"/>
    <property type="chains" value="A/B=1-502"/>
</dbReference>
<dbReference type="PDB" id="5MS2">
    <property type="method" value="X-ray"/>
    <property type="resolution" value="2.47 A"/>
    <property type="chains" value="A=1-431"/>
</dbReference>
<dbReference type="PDB" id="5MS5">
    <property type="method" value="X-ray"/>
    <property type="resolution" value="1.53 A"/>
    <property type="chains" value="A/B=24-36, A/B=39-46"/>
</dbReference>
<dbReference type="PDB" id="5MS7">
    <property type="method" value="X-ray"/>
    <property type="resolution" value="2.80 A"/>
    <property type="chains" value="A=20-502"/>
</dbReference>
<dbReference type="PDB" id="5MS8">
    <property type="method" value="X-ray"/>
    <property type="resolution" value="2.85 A"/>
    <property type="chains" value="A=1-487"/>
</dbReference>
<dbReference type="PDB" id="5XAD">
    <property type="method" value="X-ray"/>
    <property type="resolution" value="1.88 A"/>
    <property type="chains" value="C/D=12-34"/>
</dbReference>
<dbReference type="PDBsum" id="5CQC"/>
<dbReference type="PDBsum" id="5HZY"/>
<dbReference type="PDBsum" id="5IO3"/>
<dbReference type="PDBsum" id="5IZV"/>
<dbReference type="PDBsum" id="5MS2"/>
<dbReference type="PDBsum" id="5MS5"/>
<dbReference type="PDBsum" id="5MS7"/>
<dbReference type="PDBsum" id="5MS8"/>
<dbReference type="PDBsum" id="5XAD"/>
<dbReference type="SMR" id="Q5ZUV9"/>
<dbReference type="STRING" id="272624.lpg1683"/>
<dbReference type="PaxDb" id="272624-lpg1683"/>
<dbReference type="GeneID" id="57035674"/>
<dbReference type="KEGG" id="lpn:lpg1683"/>
<dbReference type="PATRIC" id="fig|272624.6.peg.1764"/>
<dbReference type="eggNOG" id="ENOG5031DWI">
    <property type="taxonomic scope" value="Bacteria"/>
</dbReference>
<dbReference type="HOGENOM" id="CLU_559960_0_0_6"/>
<dbReference type="OrthoDB" id="5646986at2"/>
<dbReference type="EvolutionaryTrace" id="Q5ZUV9"/>
<dbReference type="Proteomes" id="UP000000609">
    <property type="component" value="Chromosome"/>
</dbReference>
<dbReference type="GO" id="GO:0005576">
    <property type="term" value="C:extracellular region"/>
    <property type="evidence" value="ECO:0007669"/>
    <property type="project" value="UniProtKB-SubCell"/>
</dbReference>
<dbReference type="GO" id="GO:0044162">
    <property type="term" value="C:host cell cytoplasmic vesicle membrane"/>
    <property type="evidence" value="ECO:0007669"/>
    <property type="project" value="UniProtKB-SubCell"/>
</dbReference>
<dbReference type="GO" id="GO:0033648">
    <property type="term" value="C:host intracellular membrane-bounded organelle"/>
    <property type="evidence" value="ECO:0000314"/>
    <property type="project" value="UniProtKB"/>
</dbReference>
<dbReference type="GO" id="GO:0016020">
    <property type="term" value="C:membrane"/>
    <property type="evidence" value="ECO:0007669"/>
    <property type="project" value="UniProtKB-KW"/>
</dbReference>
<dbReference type="GO" id="GO:0008234">
    <property type="term" value="F:cysteine-type peptidase activity"/>
    <property type="evidence" value="ECO:0000314"/>
    <property type="project" value="UniProtKB"/>
</dbReference>
<dbReference type="GO" id="GO:0032266">
    <property type="term" value="F:phosphatidylinositol-3-phosphate binding"/>
    <property type="evidence" value="ECO:0000314"/>
    <property type="project" value="UniProtKB"/>
</dbReference>
<dbReference type="GO" id="GO:0051697">
    <property type="term" value="P:protein delipidation"/>
    <property type="evidence" value="ECO:0000314"/>
    <property type="project" value="UniProtKB"/>
</dbReference>
<dbReference type="GO" id="GO:0006508">
    <property type="term" value="P:proteolysis"/>
    <property type="evidence" value="ECO:0007669"/>
    <property type="project" value="UniProtKB-KW"/>
</dbReference>
<dbReference type="GO" id="GO:0140321">
    <property type="term" value="P:symbiont-mediated suppression of host autophagy"/>
    <property type="evidence" value="ECO:0000314"/>
    <property type="project" value="UniProtKB"/>
</dbReference>
<dbReference type="InterPro" id="IPR053970">
    <property type="entry name" value="RavZ_C"/>
</dbReference>
<dbReference type="Pfam" id="PF22225">
    <property type="entry name" value="RavZ_C"/>
    <property type="match status" value="1"/>
</dbReference>
<dbReference type="Pfam" id="PF24600">
    <property type="entry name" value="RavZ_cat"/>
    <property type="match status" value="1"/>
</dbReference>
<feature type="chain" id="PRO_0000454158" description="Cysteine protease RavZ">
    <location>
        <begin position="1"/>
        <end position="502"/>
    </location>
</feature>
<feature type="region of interest" description="Catalytic region" evidence="18">
    <location>
        <begin position="49"/>
        <end position="325"/>
    </location>
</feature>
<feature type="region of interest" description="Alpha-3 helix" evidence="17">
    <location>
        <begin position="211"/>
        <end position="217"/>
    </location>
</feature>
<feature type="region of interest" description="Membrane targeting region" evidence="18">
    <location>
        <begin position="326"/>
        <end position="431"/>
    </location>
</feature>
<feature type="short sequence motif" description="LIR 1" evidence="4">
    <location>
        <begin position="9"/>
        <end position="23"/>
    </location>
</feature>
<feature type="short sequence motif" description="LIR 2" evidence="4">
    <location>
        <begin position="23"/>
        <end position="37"/>
    </location>
</feature>
<feature type="short sequence motif" description="LIR 3" evidence="4">
    <location>
        <begin position="429"/>
        <end position="443"/>
    </location>
</feature>
<feature type="active site" evidence="3">
    <location>
        <position position="176"/>
    </location>
</feature>
<feature type="active site" evidence="3">
    <location>
        <position position="197"/>
    </location>
</feature>
<feature type="active site" evidence="2 3 5">
    <location>
        <position position="258"/>
    </location>
</feature>
<feature type="mutagenesis site" description="In mLIR1; only binds one ATG8 protein instead of two." evidence="4">
    <original>FEEL</original>
    <variation>AEEA</variation>
    <location>
        <begin position="16"/>
        <end position="19"/>
    </location>
</feature>
<feature type="mutagenesis site" description="In mLIR2; only binds one ATG8 protein instead of two." evidence="4">
    <original>FDLL</original>
    <variation>ADLA</variation>
    <location>
        <begin position="29"/>
        <end position="32"/>
    </location>
</feature>
<feature type="mutagenesis site" description="Reduced ability to cleave lipid-conjugated ATG8 family proteins." evidence="5">
    <original>F</original>
    <variation>A</variation>
    <location>
        <position position="29"/>
    </location>
</feature>
<feature type="mutagenesis site" description="Abolished ability to cleave lipid-conjugated ATG8 family proteins." evidence="12">
    <original>MN</original>
    <variation>AA</variation>
    <location>
        <begin position="63"/>
        <end position="64"/>
    </location>
</feature>
<feature type="mutagenesis site" description="Reduced ability to cleave lipid-conjugated ATG8 family proteins." evidence="5">
    <original>LDRRL</original>
    <variation>DDRRD</variation>
    <location>
        <begin position="139"/>
        <end position="143"/>
    </location>
</feature>
<feature type="mutagenesis site" description="Does not affect ability to cleave lipid-conjugated ATG8 family proteins." evidence="12">
    <original>QHQ</original>
    <variation>AQA</variation>
    <location>
        <begin position="175"/>
        <end position="177"/>
    </location>
</feature>
<feature type="mutagenesis site" description="Abolished ability to cleave lipid-conjugated ATG8 family proteins; when associated with A-258." evidence="3">
    <original>H</original>
    <variation>A</variation>
    <location>
        <position position="176"/>
    </location>
</feature>
<feature type="mutagenesis site" description="Reduced ability to cleave lipid-conjugated ATG8 family proteins." evidence="5">
    <original>LTI</original>
    <variation>DTD</variation>
    <location>
        <begin position="180"/>
        <end position="182"/>
    </location>
</feature>
<feature type="mutagenesis site" description="Abolished ability to cleave lipid-conjugated ATG8 family proteins." evidence="3">
    <original>D</original>
    <variation>A</variation>
    <location>
        <position position="197"/>
    </location>
</feature>
<feature type="mutagenesis site" description="Reduced ability to cleave lipid-conjugated ATG8 family proteins." evidence="5">
    <original>L</original>
    <variation>D</variation>
    <location>
        <position position="208"/>
    </location>
</feature>
<feature type="mutagenesis site" description="Reduced binding to membranes." evidence="3">
    <original>YFKGKYR</original>
    <variation>AAAGAAA</variation>
    <location>
        <begin position="211"/>
        <end position="217"/>
    </location>
</feature>
<feature type="mutagenesis site" description="Reduced binding to membranes. Abolished ability to cleave lipid-conjugated ATG8 family proteins." evidence="3 5">
    <original>YFKGKY</original>
    <variation>DDKGKD</variation>
    <location>
        <begin position="211"/>
        <end position="216"/>
    </location>
</feature>
<feature type="mutagenesis site" description="Reduced ability to cleave lipid-conjugated ATG8 family proteins." evidence="5">
    <original>Y</original>
    <variation>D</variation>
    <location>
        <position position="211"/>
    </location>
</feature>
<feature type="mutagenesis site" description="Reduced ability to cleave lipid-conjugated ATG8 family proteins." evidence="5">
    <original>F</original>
    <variation>D</variation>
    <location>
        <position position="212"/>
    </location>
</feature>
<feature type="mutagenesis site" description="Slightly reduced ability to cleave lipid-conjugated ATG8 family proteins." evidence="5">
    <original>Y</original>
    <variation>D</variation>
    <location>
        <position position="216"/>
    </location>
</feature>
<feature type="mutagenesis site" description="Reduced ability to cleave lipid-conjugated ATG8 family proteins." evidence="5">
    <original>LTQSIEKAI</original>
    <variation>DTQSDEKAD</variation>
    <location>
        <begin position="224"/>
        <end position="232"/>
    </location>
</feature>
<feature type="mutagenesis site" description="Reduced ability to cleave lipid-conjugated ATG8 family proteins." evidence="5">
    <original>FTLGKF</original>
    <variation>DTDGKD</variation>
    <location>
        <begin position="237"/>
        <end position="242"/>
    </location>
</feature>
<feature type="mutagenesis site" description="Abolished ability to cleave lipid-conjugated ATG8 family proteins. Abolished ability to cleave lipid-conjugated ATG8 family proteins; when associated with A-176." evidence="2 5 9">
    <original>C</original>
    <variation>A</variation>
    <variation>S</variation>
    <location>
        <position position="258"/>
    </location>
</feature>
<feature type="mutagenesis site" description="Reduced binding to phosphatidylinositol 3-monophosphate (PI3P); when associated with A-404." evidence="3">
    <original>K</original>
    <variation>A</variation>
    <location>
        <position position="306"/>
    </location>
</feature>
<feature type="mutagenesis site" description="Strongly reduced binding to phosphatidylinositol 3-monophosphate (PI3P); when associated with 359-A--A-362." evidence="3">
    <original>R</original>
    <variation>A</variation>
    <location>
        <position position="343"/>
    </location>
</feature>
<feature type="mutagenesis site" description="Strongly reduced binding to phosphatidylinositol 3-monophosphate (PI3P); when associated with A-343." evidence="3">
    <original>KTAK</original>
    <variation>ATAA</variation>
    <location>
        <begin position="359"/>
        <end position="362"/>
    </location>
</feature>
<feature type="mutagenesis site" description="Reduced binding to phosphatidylinositol 3-monophosphate (PI3P); when associated with A-306." evidence="3">
    <original>K</original>
    <variation>A</variation>
    <location>
        <position position="404"/>
    </location>
</feature>
<feature type="mutagenesis site" description="In mLIR3; only binds one ATG8 protein instead of two." evidence="4">
    <original>FVTI</original>
    <variation>AVTA</variation>
    <location>
        <begin position="435"/>
        <end position="438"/>
    </location>
</feature>
<feature type="strand" evidence="34">
    <location>
        <begin position="12"/>
        <end position="17"/>
    </location>
</feature>
<feature type="strand" evidence="34">
    <location>
        <begin position="23"/>
        <end position="25"/>
    </location>
</feature>
<feature type="strand" evidence="34">
    <location>
        <begin position="29"/>
        <end position="34"/>
    </location>
</feature>
<feature type="helix" evidence="31">
    <location>
        <begin position="41"/>
        <end position="43"/>
    </location>
</feature>
<feature type="turn" evidence="31">
    <location>
        <begin position="44"/>
        <end position="46"/>
    </location>
</feature>
<feature type="strand" evidence="31">
    <location>
        <begin position="49"/>
        <end position="51"/>
    </location>
</feature>
<feature type="helix" evidence="31">
    <location>
        <begin position="59"/>
        <end position="61"/>
    </location>
</feature>
<feature type="helix" evidence="31">
    <location>
        <begin position="65"/>
        <end position="71"/>
    </location>
</feature>
<feature type="helix" evidence="31">
    <location>
        <begin position="72"/>
        <end position="74"/>
    </location>
</feature>
<feature type="strand" evidence="28">
    <location>
        <begin position="78"/>
        <end position="80"/>
    </location>
</feature>
<feature type="turn" evidence="31">
    <location>
        <begin position="85"/>
        <end position="87"/>
    </location>
</feature>
<feature type="strand" evidence="31">
    <location>
        <begin position="88"/>
        <end position="90"/>
    </location>
</feature>
<feature type="strand" evidence="32">
    <location>
        <begin position="92"/>
        <end position="94"/>
    </location>
</feature>
<feature type="strand" evidence="31">
    <location>
        <begin position="99"/>
        <end position="108"/>
    </location>
</feature>
<feature type="strand" evidence="31">
    <location>
        <begin position="110"/>
        <end position="114"/>
    </location>
</feature>
<feature type="strand" evidence="31">
    <location>
        <begin position="121"/>
        <end position="124"/>
    </location>
</feature>
<feature type="strand" evidence="33">
    <location>
        <begin position="126"/>
        <end position="130"/>
    </location>
</feature>
<feature type="strand" evidence="29">
    <location>
        <begin position="133"/>
        <end position="135"/>
    </location>
</feature>
<feature type="helix" evidence="31">
    <location>
        <begin position="137"/>
        <end position="152"/>
    </location>
</feature>
<feature type="strand" evidence="31">
    <location>
        <begin position="157"/>
        <end position="170"/>
    </location>
</feature>
<feature type="strand" evidence="31">
    <location>
        <begin position="176"/>
        <end position="185"/>
    </location>
</feature>
<feature type="turn" evidence="31">
    <location>
        <begin position="186"/>
        <end position="189"/>
    </location>
</feature>
<feature type="strand" evidence="31">
    <location>
        <begin position="190"/>
        <end position="198"/>
    </location>
</feature>
<feature type="helix" evidence="31">
    <location>
        <begin position="206"/>
        <end position="211"/>
    </location>
</feature>
<feature type="turn" evidence="31">
    <location>
        <begin position="212"/>
        <end position="214"/>
    </location>
</feature>
<feature type="strand" evidence="30">
    <location>
        <begin position="218"/>
        <end position="220"/>
    </location>
</feature>
<feature type="helix" evidence="31">
    <location>
        <begin position="221"/>
        <end position="232"/>
    </location>
</feature>
<feature type="strand" evidence="30">
    <location>
        <begin position="233"/>
        <end position="236"/>
    </location>
</feature>
<feature type="strand" evidence="32">
    <location>
        <begin position="237"/>
        <end position="239"/>
    </location>
</feature>
<feature type="strand" evidence="31">
    <location>
        <begin position="243"/>
        <end position="247"/>
    </location>
</feature>
<feature type="helix" evidence="31">
    <location>
        <begin position="255"/>
        <end position="275"/>
    </location>
</feature>
<feature type="strand" evidence="31">
    <location>
        <begin position="284"/>
        <end position="288"/>
    </location>
</feature>
<feature type="helix" evidence="31">
    <location>
        <begin position="289"/>
        <end position="292"/>
    </location>
</feature>
<feature type="helix" evidence="31">
    <location>
        <begin position="295"/>
        <end position="307"/>
    </location>
</feature>
<feature type="helix" evidence="31">
    <location>
        <begin position="312"/>
        <end position="321"/>
    </location>
</feature>
<feature type="helix" evidence="31">
    <location>
        <begin position="329"/>
        <end position="345"/>
    </location>
</feature>
<feature type="strand" evidence="30">
    <location>
        <begin position="352"/>
        <end position="354"/>
    </location>
</feature>
<feature type="helix" evidence="31">
    <location>
        <begin position="359"/>
        <end position="379"/>
    </location>
</feature>
<feature type="helix" evidence="31">
    <location>
        <begin position="384"/>
        <end position="397"/>
    </location>
</feature>
<feature type="helix" evidence="31">
    <location>
        <begin position="400"/>
        <end position="412"/>
    </location>
</feature>
<feature type="helix" evidence="31">
    <location>
        <begin position="418"/>
        <end position="422"/>
    </location>
</feature>
<feature type="helix" evidence="31">
    <location>
        <begin position="423"/>
        <end position="425"/>
    </location>
</feature>
<keyword id="KW-0002">3D-structure</keyword>
<keyword id="KW-1036">Host cytoplasmic vesicle</keyword>
<keyword id="KW-1043">Host membrane</keyword>
<keyword id="KW-0378">Hydrolase</keyword>
<keyword id="KW-0472">Membrane</keyword>
<keyword id="KW-0645">Protease</keyword>
<keyword id="KW-1185">Reference proteome</keyword>
<keyword id="KW-0964">Secreted</keyword>
<keyword id="KW-0788">Thiol protease</keyword>
<keyword id="KW-0843">Virulence</keyword>
<reference key="1">
    <citation type="journal article" date="2004" name="Science">
        <title>The genomic sequence of the accidental pathogen Legionella pneumophila.</title>
        <authorList>
            <person name="Chien M."/>
            <person name="Morozova I."/>
            <person name="Shi S."/>
            <person name="Sheng H."/>
            <person name="Chen J."/>
            <person name="Gomez S.M."/>
            <person name="Asamani G."/>
            <person name="Hill K."/>
            <person name="Nuara J."/>
            <person name="Feder M."/>
            <person name="Rineer J."/>
            <person name="Greenberg J.J."/>
            <person name="Steshenko V."/>
            <person name="Park S.H."/>
            <person name="Zhao B."/>
            <person name="Teplitskaya E."/>
            <person name="Edwards J.R."/>
            <person name="Pampou S."/>
            <person name="Georghiou A."/>
            <person name="Chou I.-C."/>
            <person name="Iannuccilli W."/>
            <person name="Ulz M.E."/>
            <person name="Kim D.H."/>
            <person name="Geringer-Sameth A."/>
            <person name="Goldsberry C."/>
            <person name="Morozov P."/>
            <person name="Fischer S.G."/>
            <person name="Segal G."/>
            <person name="Qu X."/>
            <person name="Rzhetsky A."/>
            <person name="Zhang P."/>
            <person name="Cayanis E."/>
            <person name="De Jong P.J."/>
            <person name="Ju J."/>
            <person name="Kalachikov S."/>
            <person name="Shuman H.A."/>
            <person name="Russo J.J."/>
        </authorList>
    </citation>
    <scope>NUCLEOTIDE SEQUENCE [LARGE SCALE GENOMIC DNA]</scope>
    <source>
        <strain>Philadelphia 1 / ATCC 33152 / DSM 7513</strain>
    </source>
</reference>
<reference key="2">
    <citation type="journal article" date="2011" name="Cell. Microbiol.">
        <title>The E Block motif is associated with Legionella pneumophila translocated substrates.</title>
        <authorList>
            <person name="Huang L."/>
            <person name="Boyd D."/>
            <person name="Amyot W.M."/>
            <person name="Hempstead A.D."/>
            <person name="Luo Z.Q."/>
            <person name="O'Connor T.J."/>
            <person name="Chen C."/>
            <person name="Machner M."/>
            <person name="Montminy T."/>
            <person name="Isberg R.R."/>
        </authorList>
    </citation>
    <scope>SUBCELLULAR LOCATION</scope>
</reference>
<reference key="3">
    <citation type="journal article" date="2012" name="Science">
        <title>The Legionella effector RavZ inhibits host autophagy through irreversible Atg8 deconjugation.</title>
        <authorList>
            <person name="Choy A."/>
            <person name="Dancourt J."/>
            <person name="Mugo B."/>
            <person name="O'Connor T.J."/>
            <person name="Isberg R.R."/>
            <person name="Melia T.J."/>
            <person name="Roy C.R."/>
        </authorList>
    </citation>
    <scope>FUNCTION</scope>
    <scope>CATALYTIC ACTIVITY</scope>
    <scope>ACTIVE SITE</scope>
    <scope>SUBCELLULAR LOCATION</scope>
    <scope>MUTAGENESIS OF CYS-258</scope>
</reference>
<reference key="4">
    <citation type="journal article" date="2017" name="Front. Cell. Infect. Microbiol.">
        <title>Legionella RavZ plays a role in preventing ubiquitin recruitment to bacteria-containing vacuoles.</title>
        <authorList>
            <person name="Kubori T."/>
            <person name="Bui X.T."/>
            <person name="Hubber A."/>
            <person name="Nagai H."/>
        </authorList>
    </citation>
    <scope>FUNCTION</scope>
</reference>
<reference key="5">
    <citation type="journal article" date="2018" name="Autophagy">
        <title>Delipidation of mammalian Atg8-family proteins by each of the four ATG4 proteases.</title>
        <authorList>
            <person name="Kauffman K.J."/>
            <person name="Yu S."/>
            <person name="Jin J."/>
            <person name="Mugo B."/>
            <person name="Nguyen N."/>
            <person name="O'Brien A."/>
            <person name="Nag S."/>
            <person name="Lystad A.H."/>
            <person name="Melia T.J."/>
        </authorList>
    </citation>
    <scope>FUNCTION</scope>
</reference>
<reference key="6">
    <citation type="journal article" date="2019" name="BMB Rep.">
        <title>LIR motifs and the membrane-targeting domain are complementary in the function of RavZ.</title>
        <authorList>
            <person name="Park S.W."/>
            <person name="Jun Y.W."/>
            <person name="Jeon P."/>
            <person name="Lee Y.K."/>
            <person name="Park J.H."/>
            <person name="Lee S.H."/>
            <person name="Lee J.A."/>
            <person name="Jang D.J."/>
        </authorList>
    </citation>
    <scope>FUNCTION</scope>
    <scope>SUBCELLULAR LOCATION</scope>
    <scope>DOMAIN</scope>
</reference>
<reference key="7">
    <citation type="journal article" date="2019" name="Sci. Rep.">
        <title>Monitoring LC3- or GABARAP-positive autophagic membranes using modified RavZ-based probes.</title>
        <authorList>
            <person name="Park S.W."/>
            <person name="Jeon P."/>
            <person name="Jun Y.W."/>
            <person name="Park J.H."/>
            <person name="Lee S.H."/>
            <person name="Lee S."/>
            <person name="Lee J.A."/>
            <person name="Jang D.J."/>
        </authorList>
    </citation>
    <scope>FUNCTION</scope>
    <scope>SUBCELLULAR LOCATION</scope>
    <scope>DOMAIN</scope>
</reference>
<reference key="8">
    <citation type="journal article" date="2020" name="ChemBioChem">
        <title>Distinct mechanisms for processing autophagy protein LC3-PE by RavZ and ATG4B.</title>
        <authorList>
            <person name="Yang A."/>
            <person name="Pantoom S."/>
            <person name="Wu Y.W."/>
        </authorList>
    </citation>
    <scope>FUNCTION</scope>
    <scope>CATALYTIC ACTIVITY</scope>
    <scope>MUTAGENESIS OF 63-MET-ASN-64 AND 175-GLN--GLN-177</scope>
</reference>
<reference key="9">
    <citation type="journal article" date="2020" name="Infect. Immun.">
        <title>Legionella pneumophila excludes autophagy adaptors from the ubiquitin-labeled vacuole in which it resides.</title>
        <authorList>
            <person name="Omotade T.O."/>
            <person name="Roy C.R."/>
        </authorList>
    </citation>
    <scope>FUNCTION</scope>
</reference>
<reference key="10">
    <citation type="journal article" date="2021" name="BMB Rep.">
        <title>Deciphering the role of a membrane-targeting domain in assisting endosomal and autophagic membrane localization of a RavZ protein catalytic domain.</title>
        <authorList>
            <person name="Park J.H."/>
            <person name="Lee S.H."/>
            <person name="Park S.W."/>
            <person name="Jun Y.W."/>
            <person name="Kim K."/>
            <person name="Jeon P."/>
            <person name="Kim M."/>
            <person name="Lee J.A."/>
            <person name="Jang D.J."/>
        </authorList>
    </citation>
    <scope>FUNCTION</scope>
    <scope>CATALYTIC ACTIVITY</scope>
    <scope>SUBCELLULAR LOCATION</scope>
</reference>
<reference key="11">
    <citation type="journal article" date="2021" name="Mol. Cell">
        <title>Non-canonical autophagy drives alternative ATG8 conjugation to phosphatidylserine.</title>
        <authorList>
            <person name="Durgan J."/>
            <person name="Lystad A.H."/>
            <person name="Sloan K."/>
            <person name="Carlsson S.R."/>
            <person name="Wilson M.I."/>
            <person name="Marcassa E."/>
            <person name="Ulferts R."/>
            <person name="Webster J."/>
            <person name="Lopez-Clavijo A.F."/>
            <person name="Wakelam M.J."/>
            <person name="Beale R."/>
            <person name="Simonsen A."/>
            <person name="Oxley D."/>
            <person name="Florey O."/>
        </authorList>
    </citation>
    <scope>FUNCTION</scope>
    <scope>CATALYTIC ACTIVITY</scope>
</reference>
<reference evidence="22" key="12">
    <citation type="journal article" date="2015" name="Dev. Cell">
        <title>The Legionella anti-autophagy effector RavZ targets the autophagosome via PI3P- and curvature-sensing motifs.</title>
        <authorList>
            <person name="Horenkamp F.A."/>
            <person name="Kauffman K.J."/>
            <person name="Kohler L.J."/>
            <person name="Sherwood R.K."/>
            <person name="Krueger K.P."/>
            <person name="Shteyn V."/>
            <person name="Roy C.R."/>
            <person name="Melia T.J."/>
            <person name="Reinisch K.M."/>
        </authorList>
    </citation>
    <scope>X-RAY CRYSTALLOGRAPHY (2.98 ANGSTROMS) OF 10-458</scope>
    <scope>FUNCTION</scope>
    <scope>CATALYTIC ACTIVITY</scope>
    <scope>ACTIVE SITES</scope>
    <scope>SUBCELLULAR LOCATION</scope>
    <scope>DOMAIN</scope>
    <scope>MUTAGENESIS OF HIS-176; ASP-197; 211-TYR--ARG-217; 211-TYR--TYR-216; CYS-258; LYS-306; ARG-343; 359-LYS--LYS-362 AND LYS-404</scope>
</reference>
<reference evidence="23 24" key="13">
    <citation type="journal article" date="2017" name="Autophagy">
        <title>The 1:2 complex between RavZ and LC3 reveals a mechanism for deconjugation of LC3 on the phagophore membrane.</title>
        <authorList>
            <person name="Kwon D.H."/>
            <person name="Kim S."/>
            <person name="Jung Y.O."/>
            <person name="Roh K.H."/>
            <person name="Kim L."/>
            <person name="Kim B.W."/>
            <person name="Hong S.B."/>
            <person name="Lee I.Y."/>
            <person name="Song J.H."/>
            <person name="Lee W.C."/>
            <person name="Choi E.J."/>
            <person name="Hwang K.Y."/>
            <person name="Song H.K."/>
        </authorList>
    </citation>
    <scope>X-RAY CRYSTALLOGRAPHY (2.55 ANGSTROMS) OF 49-502</scope>
    <scope>DOMAIN</scope>
    <scope>MUTAGENESIS OF 16-PHE--LEU-19; 29-PHE--LEU-32 AND 435-PHE--ILE-438</scope>
</reference>
<reference evidence="27" key="14">
    <citation type="journal article" date="2017" name="Biochem. Biophys. Res. Commun.">
        <title>A novel conformation of the LC3-interacting region motif revealed by the structure of a complex between LC3B and RavZ.</title>
        <authorList>
            <person name="Kwon D.H."/>
            <person name="Kim L."/>
            <person name="Kim B.W."/>
            <person name="Kim J.H."/>
            <person name="Roh K.H."/>
            <person name="Choi E.J."/>
            <person name="Song H.K."/>
        </authorList>
    </citation>
    <scope>X-RAY CRYSTALLOGRAPHY (1.88 ANGSTROMS) OF 12-34 IN COMPLEX WITH MAP1LC3B</scope>
    <scope>DOMAIN</scope>
</reference>
<reference evidence="25 26" key="15">
    <citation type="journal article" date="2017" name="Elife">
        <title>Elucidation of the anti-autophagy mechanism of the Legionella effector RavZ using semisynthetic LC3 proteins.</title>
        <authorList>
            <person name="Yang A."/>
            <person name="Pantoom S."/>
            <person name="Wu Y.W."/>
        </authorList>
    </citation>
    <scope>X-RAY CRYSTALLOGRAPHY (1.53 ANGSTROMS) OF 24-36 AND 39-46 IN COMPLEX WITH MAP1LC3B</scope>
    <scope>FUNCTION</scope>
    <scope>CATALYTIC ACTIVITY</scope>
    <scope>ACTIVE SITE</scope>
    <scope>DOMAIN</scope>
    <scope>MUTAGENESIS OF PHE-29; 139-LEU--LEU-143; 180-LEU--ILE-182; LEU-208; 211-TYR--TYR-216; TYR-211; PHE-212; TYR-216; 224-LEU--ILE-232; 237-PHE--PHE-242 AND CYS-258</scope>
</reference>
<sequence>MKGKLTGKDKLIVDEFEELGEQESDIDEFDLLEGDEKLPGDSELDKTTSIYPPETSWEVNKGMNSSRLHKLYSLFFDKSSAFYLGDDVSVLEDKPLTGAYGFQSKKNDQQIFLFRPDSDYVAGYHVDAKSDAGWVNDKLDRRLSEISEFCSKATQPATFILPFVEMPTDITKGVQHQVLLTISYDPKSKQLTPTVYDSIGRDTYSESLSSYFKGKYRTTCDEILTQSIEKAIKSTDFTLGKFTRAAYNHQNRLTEGNCGSYTFRTIKEVISSSAQGTEVKIPGSGYITSNSYLTSQHVQDIESCIKYRNLGVVDIESALTEGKTLPVQLSEFIVALEDYGKLRSQQSEKSMLNFIGYSKTAKLTAVELLIGILNDIKGKNEISESQYDKLVKEVDCLMDSSLGKLVQFHLKNLGAESLQKLVLPCVKFDDTIDDFVTIEKDELFDVPDITGEELASKKGIEQGALDKEALLKQKQIKTDLLDLREEDKTGLKKPLHGGIKVK</sequence>
<name>RAVZ_LEGPH</name>